<comment type="function">
    <text evidence="2">Non-canonical ABC transporter that contains transmembrane domains (TMD), which form a pore in the inner membrane, and an ATP-binding domain (NBD), which is responsible for energy generation. Overexpression confers resistance against macrolides.</text>
</comment>
<comment type="subunit">
    <text evidence="1">Homodimer.</text>
</comment>
<comment type="subcellular location">
    <subcellularLocation>
        <location evidence="1">Cell inner membrane</location>
        <topology evidence="1">Multi-pass membrane protein</topology>
    </subcellularLocation>
</comment>
<comment type="similarity">
    <text evidence="1">Belongs to the ABC transporter superfamily. Macrolide exporter (TC 3.A.1.122) family.</text>
</comment>
<feature type="chain" id="PRO_0000269947" description="Macrolide export ATP-binding/permease protein MacB">
    <location>
        <begin position="1"/>
        <end position="644"/>
    </location>
</feature>
<feature type="transmembrane region" description="Helical" evidence="1">
    <location>
        <begin position="270"/>
        <end position="290"/>
    </location>
</feature>
<feature type="transmembrane region" description="Helical" evidence="1">
    <location>
        <begin position="524"/>
        <end position="544"/>
    </location>
</feature>
<feature type="transmembrane region" description="Helical" evidence="1">
    <location>
        <begin position="574"/>
        <end position="594"/>
    </location>
</feature>
<feature type="transmembrane region" description="Helical" evidence="1">
    <location>
        <begin position="607"/>
        <end position="627"/>
    </location>
</feature>
<feature type="domain" description="ABC transporter" evidence="1">
    <location>
        <begin position="4"/>
        <end position="242"/>
    </location>
</feature>
<feature type="binding site" evidence="1">
    <location>
        <begin position="40"/>
        <end position="47"/>
    </location>
    <ligand>
        <name>ATP</name>
        <dbReference type="ChEBI" id="CHEBI:30616"/>
    </ligand>
</feature>
<name>MACB_NEIGO</name>
<protein>
    <recommendedName>
        <fullName evidence="1">Macrolide export ATP-binding/permease protein MacB</fullName>
        <ecNumber evidence="1">7.6.2.-</ecNumber>
    </recommendedName>
</protein>
<gene>
    <name evidence="1" type="primary">macB</name>
</gene>
<keyword id="KW-0046">Antibiotic resistance</keyword>
<keyword id="KW-0067">ATP-binding</keyword>
<keyword id="KW-0997">Cell inner membrane</keyword>
<keyword id="KW-1003">Cell membrane</keyword>
<keyword id="KW-0472">Membrane</keyword>
<keyword id="KW-0547">Nucleotide-binding</keyword>
<keyword id="KW-1278">Translocase</keyword>
<keyword id="KW-0812">Transmembrane</keyword>
<keyword id="KW-1133">Transmembrane helix</keyword>
<keyword id="KW-0813">Transport</keyword>
<proteinExistence type="evidence at protein level"/>
<reference key="1">
    <citation type="journal article" date="2005" name="J. Antimicrob. Chemother.">
        <title>Characterization of the MacA-MacB efflux system in Neisseria gonorrhoeae.</title>
        <authorList>
            <person name="Rouquette-Loughlin C.E."/>
            <person name="Balthazar J.T."/>
            <person name="Shafer W.M."/>
        </authorList>
    </citation>
    <scope>NUCLEOTIDE SEQUENCE [GENOMIC DNA]</scope>
    <scope>FUNCTION IN MACROLIDE TRANSPORT</scope>
    <source>
        <strain>FA19</strain>
    </source>
</reference>
<organism>
    <name type="scientific">Neisseria gonorrhoeae</name>
    <dbReference type="NCBI Taxonomy" id="485"/>
    <lineage>
        <taxon>Bacteria</taxon>
        <taxon>Pseudomonadati</taxon>
        <taxon>Pseudomonadota</taxon>
        <taxon>Betaproteobacteria</taxon>
        <taxon>Neisseriales</taxon>
        <taxon>Neisseriaceae</taxon>
        <taxon>Neisseria</taxon>
    </lineage>
</organism>
<sequence>MSLIECKNINRYFGSGENRVHILKDISLSIEKGDFVAIIGQSGSGKSTLMNILGCLDTAGSGSYRIDGIETAKMQPDELAALRRERFGFIFQRYNLLSSLTARDNVALPAVYMGMGGKERSARADKLLQDLGLASKEGNKPGELSGGQQQRVSIARALMNGGEIIFADEPTGALDTASGKNVMEIIRRLHEAGHTVIMVTHDPGIAANANRVIEIRDGEIISDTSKNPEIPASNVGRIQEKASWSFYYDQFVEAFRMSVQAVLAHKMRSLLTMLGIIIGIASVVSVVALGNGSQKKILEDISSMGTNTISIFPGRGFGDRRSGKIKTLTIDDAKIIAKQSYVASATPMTSSGGTLTYRNTDLTASLYGVGEQYFDVRGLKLETGRLFDENDVKEDAQVVVIDQNVKDKLFADSDPLGKTILFRKRPLTVIGVMKKDENAFGNSDVLMLWSPYTTVMHQITGESHTNSITVKIKDNANTRVAEKGLAELLKARHGTEDFFMNNSDSIRQMVESTTGTMKLLISSIALISLVVGGIGVMNIMLVSVTERTKEIGIRMAIGARRGNILQQFLIEAVLICIIGGLVGVGLSAAVSLVFNHFVTDFPMDISAASVIGAVACSTGIGIAFGFMPANKAAKLNPIDALAQD</sequence>
<dbReference type="EC" id="7.6.2.-" evidence="1"/>
<dbReference type="EMBL" id="AY768532">
    <property type="protein sequence ID" value="AAV85982.1"/>
    <property type="molecule type" value="Genomic_DNA"/>
</dbReference>
<dbReference type="RefSeq" id="WP_003689301.1">
    <property type="nucleotide sequence ID" value="NZ_UGRM01000002.1"/>
</dbReference>
<dbReference type="SMR" id="Q5MK06"/>
<dbReference type="CARD" id="ARO:3000535">
    <property type="molecule name" value="macB"/>
    <property type="mechanism identifier" value="ARO:0010000"/>
    <property type="mechanism name" value="antibiotic efflux"/>
</dbReference>
<dbReference type="GO" id="GO:0005886">
    <property type="term" value="C:plasma membrane"/>
    <property type="evidence" value="ECO:0007669"/>
    <property type="project" value="UniProtKB-SubCell"/>
</dbReference>
<dbReference type="GO" id="GO:0005524">
    <property type="term" value="F:ATP binding"/>
    <property type="evidence" value="ECO:0007669"/>
    <property type="project" value="UniProtKB-KW"/>
</dbReference>
<dbReference type="GO" id="GO:0016887">
    <property type="term" value="F:ATP hydrolysis activity"/>
    <property type="evidence" value="ECO:0007669"/>
    <property type="project" value="InterPro"/>
</dbReference>
<dbReference type="GO" id="GO:0022857">
    <property type="term" value="F:transmembrane transporter activity"/>
    <property type="evidence" value="ECO:0007669"/>
    <property type="project" value="TreeGrafter"/>
</dbReference>
<dbReference type="GO" id="GO:0046677">
    <property type="term" value="P:response to antibiotic"/>
    <property type="evidence" value="ECO:0007669"/>
    <property type="project" value="UniProtKB-KW"/>
</dbReference>
<dbReference type="CDD" id="cd03255">
    <property type="entry name" value="ABC_MJ0796_LolCDE_FtsE"/>
    <property type="match status" value="1"/>
</dbReference>
<dbReference type="FunFam" id="3.40.50.300:FF:000032">
    <property type="entry name" value="Export ABC transporter ATP-binding protein"/>
    <property type="match status" value="1"/>
</dbReference>
<dbReference type="Gene3D" id="3.40.50.300">
    <property type="entry name" value="P-loop containing nucleotide triphosphate hydrolases"/>
    <property type="match status" value="1"/>
</dbReference>
<dbReference type="InterPro" id="IPR003593">
    <property type="entry name" value="AAA+_ATPase"/>
</dbReference>
<dbReference type="InterPro" id="IPR003838">
    <property type="entry name" value="ABC3_permease_C"/>
</dbReference>
<dbReference type="InterPro" id="IPR003439">
    <property type="entry name" value="ABC_transporter-like_ATP-bd"/>
</dbReference>
<dbReference type="InterPro" id="IPR017871">
    <property type="entry name" value="ABC_transporter-like_CS"/>
</dbReference>
<dbReference type="InterPro" id="IPR017911">
    <property type="entry name" value="MacB-like_ATP-bd"/>
</dbReference>
<dbReference type="InterPro" id="IPR025857">
    <property type="entry name" value="MacB_PCD"/>
</dbReference>
<dbReference type="InterPro" id="IPR050250">
    <property type="entry name" value="Macrolide_Exporter_MacB"/>
</dbReference>
<dbReference type="InterPro" id="IPR027417">
    <property type="entry name" value="P-loop_NTPase"/>
</dbReference>
<dbReference type="PANTHER" id="PTHR30572:SF14">
    <property type="entry name" value="MACROLIDE EXPORT ATP-BINDING_PERMEASE PROTEIN MACB"/>
    <property type="match status" value="1"/>
</dbReference>
<dbReference type="PANTHER" id="PTHR30572">
    <property type="entry name" value="MEMBRANE COMPONENT OF TRANSPORTER-RELATED"/>
    <property type="match status" value="1"/>
</dbReference>
<dbReference type="Pfam" id="PF00005">
    <property type="entry name" value="ABC_tran"/>
    <property type="match status" value="1"/>
</dbReference>
<dbReference type="Pfam" id="PF02687">
    <property type="entry name" value="FtsX"/>
    <property type="match status" value="1"/>
</dbReference>
<dbReference type="Pfam" id="PF12704">
    <property type="entry name" value="MacB_PCD"/>
    <property type="match status" value="1"/>
</dbReference>
<dbReference type="SMART" id="SM00382">
    <property type="entry name" value="AAA"/>
    <property type="match status" value="1"/>
</dbReference>
<dbReference type="SUPFAM" id="SSF52540">
    <property type="entry name" value="P-loop containing nucleoside triphosphate hydrolases"/>
    <property type="match status" value="1"/>
</dbReference>
<dbReference type="PROSITE" id="PS00211">
    <property type="entry name" value="ABC_TRANSPORTER_1"/>
    <property type="match status" value="1"/>
</dbReference>
<dbReference type="PROSITE" id="PS50893">
    <property type="entry name" value="ABC_TRANSPORTER_2"/>
    <property type="match status" value="1"/>
</dbReference>
<dbReference type="PROSITE" id="PS51267">
    <property type="entry name" value="MACB"/>
    <property type="match status" value="1"/>
</dbReference>
<evidence type="ECO:0000255" key="1">
    <source>
        <dbReference type="HAMAP-Rule" id="MF_01720"/>
    </source>
</evidence>
<evidence type="ECO:0000269" key="2">
    <source>
    </source>
</evidence>
<accession>Q5MK06</accession>